<name>O4C45_HUMAN</name>
<dbReference type="EMBL" id="AC023080">
    <property type="status" value="NOT_ANNOTATED_CDS"/>
    <property type="molecule type" value="Genomic_DNA"/>
</dbReference>
<dbReference type="RefSeq" id="NP_001005513.1">
    <property type="nucleotide sequence ID" value="NM_001005513.1"/>
</dbReference>
<dbReference type="SMR" id="A6NMZ5"/>
<dbReference type="FunCoup" id="A6NMZ5">
    <property type="interactions" value="416"/>
</dbReference>
<dbReference type="GlyCosmos" id="A6NMZ5">
    <property type="glycosylation" value="2 sites, No reported glycans"/>
</dbReference>
<dbReference type="GlyGen" id="A6NMZ5">
    <property type="glycosylation" value="4 sites, 1 O-linked glycan (2 sites)"/>
</dbReference>
<dbReference type="BioMuta" id="OR4C45"/>
<dbReference type="GeneID" id="403257"/>
<dbReference type="KEGG" id="hsa:403257"/>
<dbReference type="MANE-Select" id="ENST00000710319.1">
    <property type="protein sequence ID" value="ENSP00000518199.1"/>
    <property type="RefSeq nucleotide sequence ID" value="NM_001005513.1"/>
    <property type="RefSeq protein sequence ID" value="NP_001005513.1"/>
</dbReference>
<dbReference type="AGR" id="HGNC:31270"/>
<dbReference type="CTD" id="403257"/>
<dbReference type="GeneCards" id="OR4C45"/>
<dbReference type="HGNC" id="HGNC:31270">
    <property type="gene designation" value="OR4C45"/>
</dbReference>
<dbReference type="neXtProt" id="NX_A6NMZ5"/>
<dbReference type="InParanoid" id="A6NMZ5"/>
<dbReference type="OrthoDB" id="10017003at2759"/>
<dbReference type="PAN-GO" id="A6NMZ5">
    <property type="GO annotations" value="2 GO annotations based on evolutionary models"/>
</dbReference>
<dbReference type="PhylomeDB" id="A6NMZ5"/>
<dbReference type="PathwayCommons" id="A6NMZ5"/>
<dbReference type="Reactome" id="R-HSA-9752946">
    <property type="pathway name" value="Expression and translocation of olfactory receptors"/>
</dbReference>
<dbReference type="Pharos" id="A6NMZ5">
    <property type="development level" value="Tdark"/>
</dbReference>
<dbReference type="PRO" id="PR:A6NMZ5"/>
<dbReference type="Proteomes" id="UP000005640">
    <property type="component" value="Unplaced"/>
</dbReference>
<dbReference type="RNAct" id="A6NMZ5">
    <property type="molecule type" value="protein"/>
</dbReference>
<dbReference type="GO" id="GO:0005886">
    <property type="term" value="C:plasma membrane"/>
    <property type="evidence" value="ECO:0000318"/>
    <property type="project" value="GO_Central"/>
</dbReference>
<dbReference type="GO" id="GO:0004930">
    <property type="term" value="F:G protein-coupled receptor activity"/>
    <property type="evidence" value="ECO:0007669"/>
    <property type="project" value="UniProtKB-KW"/>
</dbReference>
<dbReference type="GO" id="GO:0004984">
    <property type="term" value="F:olfactory receptor activity"/>
    <property type="evidence" value="ECO:0000318"/>
    <property type="project" value="GO_Central"/>
</dbReference>
<dbReference type="CDD" id="cd15939">
    <property type="entry name" value="7tmA_OR4A-like"/>
    <property type="match status" value="1"/>
</dbReference>
<dbReference type="FunFam" id="1.20.1070.10:FF:000007">
    <property type="entry name" value="Olfactory receptor"/>
    <property type="match status" value="1"/>
</dbReference>
<dbReference type="Gene3D" id="1.20.1070.10">
    <property type="entry name" value="Rhodopsin 7-helix transmembrane proteins"/>
    <property type="match status" value="1"/>
</dbReference>
<dbReference type="InterPro" id="IPR000276">
    <property type="entry name" value="GPCR_Rhodpsn"/>
</dbReference>
<dbReference type="InterPro" id="IPR017452">
    <property type="entry name" value="GPCR_Rhodpsn_7TM"/>
</dbReference>
<dbReference type="InterPro" id="IPR000725">
    <property type="entry name" value="Olfact_rcpt"/>
</dbReference>
<dbReference type="InterPro" id="IPR050427">
    <property type="entry name" value="Olfactory_Receptors"/>
</dbReference>
<dbReference type="PANTHER" id="PTHR48002">
    <property type="entry name" value="OLFACTORY RECEPTOR"/>
    <property type="match status" value="1"/>
</dbReference>
<dbReference type="Pfam" id="PF13853">
    <property type="entry name" value="7tm_4"/>
    <property type="match status" value="1"/>
</dbReference>
<dbReference type="PRINTS" id="PR00237">
    <property type="entry name" value="GPCRRHODOPSN"/>
</dbReference>
<dbReference type="PRINTS" id="PR00245">
    <property type="entry name" value="OLFACTORYR"/>
</dbReference>
<dbReference type="SUPFAM" id="SSF81321">
    <property type="entry name" value="Family A G protein-coupled receptor-like"/>
    <property type="match status" value="1"/>
</dbReference>
<dbReference type="PROSITE" id="PS50262">
    <property type="entry name" value="G_PROTEIN_RECEP_F1_2"/>
    <property type="match status" value="1"/>
</dbReference>
<protein>
    <recommendedName>
        <fullName>Olfactory receptor 4C45</fullName>
    </recommendedName>
</protein>
<proteinExistence type="inferred from homology"/>
<feature type="chain" id="PRO_0000312176" description="Olfactory receptor 4C45">
    <location>
        <begin position="1"/>
        <end position="306"/>
    </location>
</feature>
<feature type="topological domain" description="Extracellular" evidence="3">
    <location>
        <begin position="1"/>
        <end position="25"/>
    </location>
</feature>
<feature type="transmembrane region" description="Helical; Name=1" evidence="1">
    <location>
        <begin position="26"/>
        <end position="46"/>
    </location>
</feature>
<feature type="topological domain" description="Cytoplasmic" evidence="3">
    <location>
        <position position="47"/>
    </location>
</feature>
<feature type="transmembrane region" description="Helical; Name=2" evidence="1">
    <location>
        <begin position="48"/>
        <end position="68"/>
    </location>
</feature>
<feature type="topological domain" description="Extracellular" evidence="3">
    <location>
        <begin position="69"/>
        <end position="100"/>
    </location>
</feature>
<feature type="transmembrane region" description="Helical; Name=3" evidence="1">
    <location>
        <begin position="101"/>
        <end position="121"/>
    </location>
</feature>
<feature type="topological domain" description="Cytoplasmic" evidence="3">
    <location>
        <begin position="122"/>
        <end position="137"/>
    </location>
</feature>
<feature type="transmembrane region" description="Helical; Name=4" evidence="1">
    <location>
        <begin position="138"/>
        <end position="158"/>
    </location>
</feature>
<feature type="topological domain" description="Extracellular" evidence="3">
    <location>
        <begin position="159"/>
        <end position="199"/>
    </location>
</feature>
<feature type="transmembrane region" description="Helical; Name=5" evidence="1">
    <location>
        <begin position="200"/>
        <end position="220"/>
    </location>
</feature>
<feature type="topological domain" description="Cytoplasmic" evidence="3">
    <location>
        <begin position="221"/>
        <end position="233"/>
    </location>
</feature>
<feature type="transmembrane region" description="Helical; Name=6" evidence="1">
    <location>
        <begin position="234"/>
        <end position="254"/>
    </location>
</feature>
<feature type="topological domain" description="Extracellular" evidence="3">
    <location>
        <begin position="255"/>
        <end position="263"/>
    </location>
</feature>
<feature type="transmembrane region" description="Helical; Name=7" evidence="1">
    <location>
        <begin position="264"/>
        <end position="284"/>
    </location>
</feature>
<feature type="topological domain" description="Cytoplasmic" evidence="3">
    <location>
        <begin position="285"/>
        <end position="306"/>
    </location>
</feature>
<feature type="glycosylation site" description="N-linked (GlcNAc...) asparagine" evidence="1">
    <location>
        <position position="3"/>
    </location>
</feature>
<feature type="glycosylation site" description="N-linked (GlcNAc...) asparagine" evidence="1">
    <location>
        <position position="84"/>
    </location>
</feature>
<feature type="disulfide bond" evidence="2">
    <location>
        <begin position="92"/>
        <end position="174"/>
    </location>
</feature>
<comment type="function">
    <text evidence="3">Odorant receptor.</text>
</comment>
<comment type="subcellular location">
    <subcellularLocation>
        <location>Cell membrane</location>
        <topology>Multi-pass membrane protein</topology>
    </subcellularLocation>
</comment>
<comment type="polymorphism">
    <text evidence="3">A stop codon in the gene coding for this protein at position Tyr-60 is responsible for functional diversity thus producing a pseudogene.</text>
</comment>
<comment type="similarity">
    <text evidence="2">Belongs to the G-protein coupled receptor 1 family.</text>
</comment>
<keyword id="KW-1003">Cell membrane</keyword>
<keyword id="KW-1015">Disulfide bond</keyword>
<keyword id="KW-0297">G-protein coupled receptor</keyword>
<keyword id="KW-0325">Glycoprotein</keyword>
<keyword id="KW-0472">Membrane</keyword>
<keyword id="KW-0552">Olfaction</keyword>
<keyword id="KW-0675">Receptor</keyword>
<keyword id="KW-1185">Reference proteome</keyword>
<keyword id="KW-0716">Sensory transduction</keyword>
<keyword id="KW-0807">Transducer</keyword>
<keyword id="KW-0812">Transmembrane</keyword>
<keyword id="KW-1133">Transmembrane helix</keyword>
<accession>A6NMZ5</accession>
<gene>
    <name type="primary">OR4C45</name>
</gene>
<evidence type="ECO:0000255" key="1"/>
<evidence type="ECO:0000255" key="2">
    <source>
        <dbReference type="PROSITE-ProRule" id="PRU00521"/>
    </source>
</evidence>
<evidence type="ECO:0000305" key="3"/>
<reference key="1">
    <citation type="journal article" date="2006" name="Nature">
        <title>Human chromosome 11 DNA sequence and analysis including novel gene identification.</title>
        <authorList>
            <person name="Taylor T.D."/>
            <person name="Noguchi H."/>
            <person name="Totoki Y."/>
            <person name="Toyoda A."/>
            <person name="Kuroki Y."/>
            <person name="Dewar K."/>
            <person name="Lloyd C."/>
            <person name="Itoh T."/>
            <person name="Takeda T."/>
            <person name="Kim D.-W."/>
            <person name="She X."/>
            <person name="Barlow K.F."/>
            <person name="Bloom T."/>
            <person name="Bruford E."/>
            <person name="Chang J.L."/>
            <person name="Cuomo C.A."/>
            <person name="Eichler E."/>
            <person name="FitzGerald M.G."/>
            <person name="Jaffe D.B."/>
            <person name="LaButti K."/>
            <person name="Nicol R."/>
            <person name="Park H.-S."/>
            <person name="Seaman C."/>
            <person name="Sougnez C."/>
            <person name="Yang X."/>
            <person name="Zimmer A.R."/>
            <person name="Zody M.C."/>
            <person name="Birren B.W."/>
            <person name="Nusbaum C."/>
            <person name="Fujiyama A."/>
            <person name="Hattori M."/>
            <person name="Rogers J."/>
            <person name="Lander E.S."/>
            <person name="Sakaki Y."/>
        </authorList>
    </citation>
    <scope>NUCLEOTIDE SEQUENCE [LARGE SCALE GENOMIC DNA]</scope>
</reference>
<organism>
    <name type="scientific">Homo sapiens</name>
    <name type="common">Human</name>
    <dbReference type="NCBI Taxonomy" id="9606"/>
    <lineage>
        <taxon>Eukaryota</taxon>
        <taxon>Metazoa</taxon>
        <taxon>Chordata</taxon>
        <taxon>Craniata</taxon>
        <taxon>Vertebrata</taxon>
        <taxon>Euteleostomi</taxon>
        <taxon>Mammalia</taxon>
        <taxon>Eutheria</taxon>
        <taxon>Euarchontoglires</taxon>
        <taxon>Primates</taxon>
        <taxon>Haplorrhini</taxon>
        <taxon>Catarrhini</taxon>
        <taxon>Hominidae</taxon>
        <taxon>Homo</taxon>
    </lineage>
</organism>
<sequence length="306" mass="33994">MNNVTEFILLGLTHNPELQKFLFVMFLITYLITLAGNLLISVIIFISPALGSPMYLFLSYLSIIDIFYSSSIAPKMIFDLISENNTISFNGCMTQLFTEHFFAAAETILLSVMAYDCYVAICKPLHYATIMTQSMCGFLMVVAGILGFVHGGIQTLFIAQLPFCGPNVIDHFMCDLVPLLELACTDTHTLGPLIAANSGSLCFLIFSILDASYVIILCSLRSHSSEGHLKALSSCASHIFTVILFFVPCSYLYLRPLTSFPTDKAVTVFCTLFTPMLNPLIYTVKNKAVKNVIKKLWKQIMTTDDK</sequence>